<reference key="1">
    <citation type="submission" date="2000-05" db="EMBL/GenBank/DDBJ databases">
        <title>Enterococcus faecalis pyrimidine biosynthetic gene (pyrB) encoding aspartate transcarbamoylase.</title>
        <authorList>
            <person name="Cooke P.A."/>
            <person name="Shanley M.S."/>
            <person name="O'Donovan G.A."/>
        </authorList>
    </citation>
    <scope>NUCLEOTIDE SEQUENCE [GENOMIC DNA]</scope>
    <source>
        <strain>ATCC 19433 / DSM 20478 / JCM 8726 / NBRC 100481 / NCIMB 775</strain>
    </source>
</reference>
<reference key="2">
    <citation type="journal article" date="2003" name="Science">
        <title>Role of mobile DNA in the evolution of vancomycin-resistant Enterococcus faecalis.</title>
        <authorList>
            <person name="Paulsen I.T."/>
            <person name="Banerjei L."/>
            <person name="Myers G.S.A."/>
            <person name="Nelson K.E."/>
            <person name="Seshadri R."/>
            <person name="Read T.D."/>
            <person name="Fouts D.E."/>
            <person name="Eisen J.A."/>
            <person name="Gill S.R."/>
            <person name="Heidelberg J.F."/>
            <person name="Tettelin H."/>
            <person name="Dodson R.J."/>
            <person name="Umayam L.A."/>
            <person name="Brinkac L.M."/>
            <person name="Beanan M.J."/>
            <person name="Daugherty S.C."/>
            <person name="DeBoy R.T."/>
            <person name="Durkin S.A."/>
            <person name="Kolonay J.F."/>
            <person name="Madupu R."/>
            <person name="Nelson W.C."/>
            <person name="Vamathevan J.J."/>
            <person name="Tran B."/>
            <person name="Upton J."/>
            <person name="Hansen T."/>
            <person name="Shetty J."/>
            <person name="Khouri H.M."/>
            <person name="Utterback T.R."/>
            <person name="Radune D."/>
            <person name="Ketchum K.A."/>
            <person name="Dougherty B.A."/>
            <person name="Fraser C.M."/>
        </authorList>
    </citation>
    <scope>NUCLEOTIDE SEQUENCE [LARGE SCALE GENOMIC DNA]</scope>
    <source>
        <strain>ATCC 700802 / V583</strain>
    </source>
</reference>
<protein>
    <recommendedName>
        <fullName evidence="1">Aspartate carbamoyltransferase catalytic subunit</fullName>
        <ecNumber evidence="1">2.1.3.2</ecNumber>
    </recommendedName>
    <alternativeName>
        <fullName evidence="1">Aspartate transcarbamylase</fullName>
        <shortName evidence="1">ATCase</shortName>
    </alternativeName>
</protein>
<name>PYRB_ENTFA</name>
<comment type="function">
    <text evidence="1">Catalyzes the condensation of carbamoyl phosphate and aspartate to form carbamoyl aspartate and inorganic phosphate, the committed step in the de novo pyrimidine nucleotide biosynthesis pathway.</text>
</comment>
<comment type="catalytic activity">
    <reaction evidence="1">
        <text>carbamoyl phosphate + L-aspartate = N-carbamoyl-L-aspartate + phosphate + H(+)</text>
        <dbReference type="Rhea" id="RHEA:20013"/>
        <dbReference type="ChEBI" id="CHEBI:15378"/>
        <dbReference type="ChEBI" id="CHEBI:29991"/>
        <dbReference type="ChEBI" id="CHEBI:32814"/>
        <dbReference type="ChEBI" id="CHEBI:43474"/>
        <dbReference type="ChEBI" id="CHEBI:58228"/>
        <dbReference type="EC" id="2.1.3.2"/>
    </reaction>
</comment>
<comment type="pathway">
    <text evidence="1">Pyrimidine metabolism; UMP biosynthesis via de novo pathway; (S)-dihydroorotate from bicarbonate: step 2/3.</text>
</comment>
<comment type="subunit">
    <text evidence="1">Heterododecamer (2C3:3R2) of six catalytic PyrB chains organized as two trimers (C3), and six regulatory PyrI chains organized as three dimers (R2).</text>
</comment>
<comment type="similarity">
    <text evidence="1 2">Belongs to the aspartate/ornithine carbamoyltransferase superfamily. ATCase family.</text>
</comment>
<feature type="chain" id="PRO_0000113133" description="Aspartate carbamoyltransferase catalytic subunit">
    <location>
        <begin position="1"/>
        <end position="308"/>
    </location>
</feature>
<feature type="binding site" evidence="1">
    <location>
        <position position="59"/>
    </location>
    <ligand>
        <name>carbamoyl phosphate</name>
        <dbReference type="ChEBI" id="CHEBI:58228"/>
    </ligand>
</feature>
<feature type="binding site" evidence="1">
    <location>
        <position position="60"/>
    </location>
    <ligand>
        <name>carbamoyl phosphate</name>
        <dbReference type="ChEBI" id="CHEBI:58228"/>
    </ligand>
</feature>
<feature type="binding site" evidence="1">
    <location>
        <position position="87"/>
    </location>
    <ligand>
        <name>L-aspartate</name>
        <dbReference type="ChEBI" id="CHEBI:29991"/>
    </ligand>
</feature>
<feature type="binding site" evidence="1">
    <location>
        <position position="109"/>
    </location>
    <ligand>
        <name>carbamoyl phosphate</name>
        <dbReference type="ChEBI" id="CHEBI:58228"/>
    </ligand>
</feature>
<feature type="binding site" evidence="1">
    <location>
        <position position="139"/>
    </location>
    <ligand>
        <name>carbamoyl phosphate</name>
        <dbReference type="ChEBI" id="CHEBI:58228"/>
    </ligand>
</feature>
<feature type="binding site" evidence="1">
    <location>
        <position position="142"/>
    </location>
    <ligand>
        <name>carbamoyl phosphate</name>
        <dbReference type="ChEBI" id="CHEBI:58228"/>
    </ligand>
</feature>
<feature type="binding site" evidence="1">
    <location>
        <position position="172"/>
    </location>
    <ligand>
        <name>L-aspartate</name>
        <dbReference type="ChEBI" id="CHEBI:29991"/>
    </ligand>
</feature>
<feature type="binding site" evidence="1">
    <location>
        <position position="224"/>
    </location>
    <ligand>
        <name>L-aspartate</name>
        <dbReference type="ChEBI" id="CHEBI:29991"/>
    </ligand>
</feature>
<feature type="binding site" evidence="1">
    <location>
        <position position="265"/>
    </location>
    <ligand>
        <name>carbamoyl phosphate</name>
        <dbReference type="ChEBI" id="CHEBI:58228"/>
    </ligand>
</feature>
<feature type="binding site" evidence="1">
    <location>
        <position position="266"/>
    </location>
    <ligand>
        <name>carbamoyl phosphate</name>
        <dbReference type="ChEBI" id="CHEBI:58228"/>
    </ligand>
</feature>
<accession>Q9L4T8</accession>
<gene>
    <name evidence="1" type="primary">pyrB</name>
    <name type="ordered locus">EF_1719</name>
</gene>
<organism>
    <name type="scientific">Enterococcus faecalis (strain ATCC 700802 / V583)</name>
    <dbReference type="NCBI Taxonomy" id="226185"/>
    <lineage>
        <taxon>Bacteria</taxon>
        <taxon>Bacillati</taxon>
        <taxon>Bacillota</taxon>
        <taxon>Bacilli</taxon>
        <taxon>Lactobacillales</taxon>
        <taxon>Enterococcaceae</taxon>
        <taxon>Enterococcus</taxon>
    </lineage>
</organism>
<keyword id="KW-0665">Pyrimidine biosynthesis</keyword>
<keyword id="KW-1185">Reference proteome</keyword>
<keyword id="KW-0808">Transferase</keyword>
<dbReference type="EC" id="2.1.3.2" evidence="1"/>
<dbReference type="EMBL" id="AF264709">
    <property type="protein sequence ID" value="AAF72727.1"/>
    <property type="molecule type" value="Genomic_DNA"/>
</dbReference>
<dbReference type="EMBL" id="AE016830">
    <property type="protein sequence ID" value="AAO81495.1"/>
    <property type="molecule type" value="Genomic_DNA"/>
</dbReference>
<dbReference type="RefSeq" id="NP_815425.1">
    <property type="nucleotide sequence ID" value="NC_004668.1"/>
</dbReference>
<dbReference type="RefSeq" id="WP_002357411.1">
    <property type="nucleotide sequence ID" value="NZ_KE136528.1"/>
</dbReference>
<dbReference type="SMR" id="Q9L4T8"/>
<dbReference type="STRING" id="226185.EF_1719"/>
<dbReference type="EnsemblBacteria" id="AAO81495">
    <property type="protein sequence ID" value="AAO81495"/>
    <property type="gene ID" value="EF_1719"/>
</dbReference>
<dbReference type="KEGG" id="efa:EF1719"/>
<dbReference type="PATRIC" id="fig|226185.45.peg.1793"/>
<dbReference type="eggNOG" id="COG0540">
    <property type="taxonomic scope" value="Bacteria"/>
</dbReference>
<dbReference type="HOGENOM" id="CLU_043846_2_1_9"/>
<dbReference type="SABIO-RK" id="Q9L4T8"/>
<dbReference type="UniPathway" id="UPA00070">
    <property type="reaction ID" value="UER00116"/>
</dbReference>
<dbReference type="Proteomes" id="UP000001415">
    <property type="component" value="Chromosome"/>
</dbReference>
<dbReference type="GO" id="GO:0005829">
    <property type="term" value="C:cytosol"/>
    <property type="evidence" value="ECO:0007669"/>
    <property type="project" value="TreeGrafter"/>
</dbReference>
<dbReference type="GO" id="GO:0016597">
    <property type="term" value="F:amino acid binding"/>
    <property type="evidence" value="ECO:0007669"/>
    <property type="project" value="InterPro"/>
</dbReference>
<dbReference type="GO" id="GO:0004070">
    <property type="term" value="F:aspartate carbamoyltransferase activity"/>
    <property type="evidence" value="ECO:0007669"/>
    <property type="project" value="UniProtKB-UniRule"/>
</dbReference>
<dbReference type="GO" id="GO:0006207">
    <property type="term" value="P:'de novo' pyrimidine nucleobase biosynthetic process"/>
    <property type="evidence" value="ECO:0007669"/>
    <property type="project" value="InterPro"/>
</dbReference>
<dbReference type="GO" id="GO:0044205">
    <property type="term" value="P:'de novo' UMP biosynthetic process"/>
    <property type="evidence" value="ECO:0007669"/>
    <property type="project" value="UniProtKB-UniRule"/>
</dbReference>
<dbReference type="GO" id="GO:0006520">
    <property type="term" value="P:amino acid metabolic process"/>
    <property type="evidence" value="ECO:0007669"/>
    <property type="project" value="InterPro"/>
</dbReference>
<dbReference type="FunFam" id="3.40.50.1370:FF:000011">
    <property type="entry name" value="Aspartate carbamoyltransferase"/>
    <property type="match status" value="1"/>
</dbReference>
<dbReference type="Gene3D" id="3.40.50.1370">
    <property type="entry name" value="Aspartate/ornithine carbamoyltransferase"/>
    <property type="match status" value="2"/>
</dbReference>
<dbReference type="HAMAP" id="MF_00001">
    <property type="entry name" value="Asp_carb_tr"/>
    <property type="match status" value="1"/>
</dbReference>
<dbReference type="InterPro" id="IPR006132">
    <property type="entry name" value="Asp/Orn_carbamoyltranf_P-bd"/>
</dbReference>
<dbReference type="InterPro" id="IPR006130">
    <property type="entry name" value="Asp/Orn_carbamoylTrfase"/>
</dbReference>
<dbReference type="InterPro" id="IPR036901">
    <property type="entry name" value="Asp/Orn_carbamoylTrfase_sf"/>
</dbReference>
<dbReference type="InterPro" id="IPR002082">
    <property type="entry name" value="Asp_carbamoyltransf"/>
</dbReference>
<dbReference type="InterPro" id="IPR006131">
    <property type="entry name" value="Asp_carbamoyltransf_Asp/Orn-bd"/>
</dbReference>
<dbReference type="NCBIfam" id="TIGR00670">
    <property type="entry name" value="asp_carb_tr"/>
    <property type="match status" value="1"/>
</dbReference>
<dbReference type="NCBIfam" id="NF002032">
    <property type="entry name" value="PRK00856.1"/>
    <property type="match status" value="1"/>
</dbReference>
<dbReference type="PANTHER" id="PTHR45753:SF6">
    <property type="entry name" value="ASPARTATE CARBAMOYLTRANSFERASE"/>
    <property type="match status" value="1"/>
</dbReference>
<dbReference type="PANTHER" id="PTHR45753">
    <property type="entry name" value="ORNITHINE CARBAMOYLTRANSFERASE, MITOCHONDRIAL"/>
    <property type="match status" value="1"/>
</dbReference>
<dbReference type="Pfam" id="PF00185">
    <property type="entry name" value="OTCace"/>
    <property type="match status" value="1"/>
</dbReference>
<dbReference type="Pfam" id="PF02729">
    <property type="entry name" value="OTCace_N"/>
    <property type="match status" value="1"/>
</dbReference>
<dbReference type="PRINTS" id="PR00100">
    <property type="entry name" value="AOTCASE"/>
</dbReference>
<dbReference type="PRINTS" id="PR00101">
    <property type="entry name" value="ATCASE"/>
</dbReference>
<dbReference type="SUPFAM" id="SSF53671">
    <property type="entry name" value="Aspartate/ornithine carbamoyltransferase"/>
    <property type="match status" value="1"/>
</dbReference>
<dbReference type="PROSITE" id="PS00097">
    <property type="entry name" value="CARBAMOYLTRANSFERASE"/>
    <property type="match status" value="1"/>
</dbReference>
<proteinExistence type="inferred from homology"/>
<sequence length="308" mass="34980">MIITSERISLKHLLTAEALTDREVMGLIRRAGEFKQGAKWHPEERQYFATNLFFENSTRTHKSFEVAEKKLGLEVIEFEASRSSVQKGETLYDTVLTMSAIGVDVAVIRHGKENYYDELIQSKTIQCSIINGGDGSGQHPTQCLLDLMTIYEEFGGFEGLKVAIVGDITHSRVAKSNMQLLNRLGAEIYFSGPEEWYDHQFDVYGQYVPLDEIVEKVDVMMLLRVQHERHDGKESFSKEGYHLEYGLTNERATRLQKHAIIMHPAPVNRDVELADELVESLQSRIVAQMSNGVFMRMAILEAILHGKA</sequence>
<evidence type="ECO:0000255" key="1">
    <source>
        <dbReference type="HAMAP-Rule" id="MF_00001"/>
    </source>
</evidence>
<evidence type="ECO:0000305" key="2"/>